<evidence type="ECO:0000255" key="1">
    <source>
        <dbReference type="HAMAP-Rule" id="MF_00102"/>
    </source>
</evidence>
<evidence type="ECO:0000305" key="2"/>
<protein>
    <recommendedName>
        <fullName evidence="1">4-hydroxy-tetrahydrodipicolinate reductase</fullName>
        <shortName evidence="1">HTPA reductase</shortName>
        <ecNumber evidence="1">1.17.1.8</ecNumber>
    </recommendedName>
</protein>
<feature type="chain" id="PRO_0000141409" description="4-hydroxy-tetrahydrodipicolinate reductase">
    <location>
        <begin position="1"/>
        <end position="266"/>
    </location>
</feature>
<feature type="active site" description="Proton donor/acceptor" evidence="1">
    <location>
        <position position="155"/>
    </location>
</feature>
<feature type="active site" description="Proton donor" evidence="1">
    <location>
        <position position="159"/>
    </location>
</feature>
<feature type="binding site" evidence="1">
    <location>
        <begin position="10"/>
        <end position="15"/>
    </location>
    <ligand>
        <name>NAD(+)</name>
        <dbReference type="ChEBI" id="CHEBI:57540"/>
    </ligand>
</feature>
<feature type="binding site" evidence="1">
    <location>
        <position position="38"/>
    </location>
    <ligand>
        <name>NADP(+)</name>
        <dbReference type="ChEBI" id="CHEBI:58349"/>
    </ligand>
</feature>
<feature type="binding site" evidence="1">
    <location>
        <begin position="99"/>
        <end position="101"/>
    </location>
    <ligand>
        <name>NAD(+)</name>
        <dbReference type="ChEBI" id="CHEBI:57540"/>
    </ligand>
</feature>
<feature type="binding site" evidence="1">
    <location>
        <begin position="125"/>
        <end position="128"/>
    </location>
    <ligand>
        <name>NAD(+)</name>
        <dbReference type="ChEBI" id="CHEBI:57540"/>
    </ligand>
</feature>
<feature type="binding site" evidence="1">
    <location>
        <position position="156"/>
    </location>
    <ligand>
        <name>(S)-2,3,4,5-tetrahydrodipicolinate</name>
        <dbReference type="ChEBI" id="CHEBI:16845"/>
    </ligand>
</feature>
<feature type="binding site" evidence="1">
    <location>
        <begin position="165"/>
        <end position="166"/>
    </location>
    <ligand>
        <name>(S)-2,3,4,5-tetrahydrodipicolinate</name>
        <dbReference type="ChEBI" id="CHEBI:16845"/>
    </ligand>
</feature>
<proteinExistence type="inferred from homology"/>
<organism>
    <name type="scientific">Bacillus cereus (strain ATCC 14579 / DSM 31 / CCUG 7414 / JCM 2152 / NBRC 15305 / NCIMB 9373 / NCTC 2599 / NRRL B-3711)</name>
    <dbReference type="NCBI Taxonomy" id="226900"/>
    <lineage>
        <taxon>Bacteria</taxon>
        <taxon>Bacillati</taxon>
        <taxon>Bacillota</taxon>
        <taxon>Bacilli</taxon>
        <taxon>Bacillales</taxon>
        <taxon>Bacillaceae</taxon>
        <taxon>Bacillus</taxon>
        <taxon>Bacillus cereus group</taxon>
    </lineage>
</organism>
<comment type="function">
    <text evidence="1">Catalyzes the conversion of 4-hydroxy-tetrahydrodipicolinate (HTPA) to tetrahydrodipicolinate.</text>
</comment>
<comment type="catalytic activity">
    <reaction evidence="1">
        <text>(S)-2,3,4,5-tetrahydrodipicolinate + NAD(+) + H2O = (2S,4S)-4-hydroxy-2,3,4,5-tetrahydrodipicolinate + NADH + H(+)</text>
        <dbReference type="Rhea" id="RHEA:35323"/>
        <dbReference type="ChEBI" id="CHEBI:15377"/>
        <dbReference type="ChEBI" id="CHEBI:15378"/>
        <dbReference type="ChEBI" id="CHEBI:16845"/>
        <dbReference type="ChEBI" id="CHEBI:57540"/>
        <dbReference type="ChEBI" id="CHEBI:57945"/>
        <dbReference type="ChEBI" id="CHEBI:67139"/>
        <dbReference type="EC" id="1.17.1.8"/>
    </reaction>
</comment>
<comment type="catalytic activity">
    <reaction evidence="1">
        <text>(S)-2,3,4,5-tetrahydrodipicolinate + NADP(+) + H2O = (2S,4S)-4-hydroxy-2,3,4,5-tetrahydrodipicolinate + NADPH + H(+)</text>
        <dbReference type="Rhea" id="RHEA:35331"/>
        <dbReference type="ChEBI" id="CHEBI:15377"/>
        <dbReference type="ChEBI" id="CHEBI:15378"/>
        <dbReference type="ChEBI" id="CHEBI:16845"/>
        <dbReference type="ChEBI" id="CHEBI:57783"/>
        <dbReference type="ChEBI" id="CHEBI:58349"/>
        <dbReference type="ChEBI" id="CHEBI:67139"/>
        <dbReference type="EC" id="1.17.1.8"/>
    </reaction>
</comment>
<comment type="pathway">
    <text evidence="1">Amino-acid biosynthesis; L-lysine biosynthesis via DAP pathway; (S)-tetrahydrodipicolinate from L-aspartate: step 4/4.</text>
</comment>
<comment type="subcellular location">
    <subcellularLocation>
        <location evidence="1">Cytoplasm</location>
    </subcellularLocation>
</comment>
<comment type="similarity">
    <text evidence="1">Belongs to the DapB family.</text>
</comment>
<comment type="caution">
    <text evidence="2">Was originally thought to be a dihydrodipicolinate reductase (DHDPR), catalyzing the conversion of dihydrodipicolinate to tetrahydrodipicolinate. However, it was shown in E.coli that the substrate of the enzymatic reaction is not dihydrodipicolinate (DHDP) but in fact (2S,4S)-4-hydroxy-2,3,4,5-tetrahydrodipicolinic acid (HTPA), the product released by the DapA-catalyzed reaction.</text>
</comment>
<dbReference type="EC" id="1.17.1.8" evidence="1"/>
<dbReference type="EMBL" id="AE016877">
    <property type="protein sequence ID" value="AAP08512.1"/>
    <property type="molecule type" value="Genomic_DNA"/>
</dbReference>
<dbReference type="RefSeq" id="NP_831311.1">
    <property type="nucleotide sequence ID" value="NC_004722.1"/>
</dbReference>
<dbReference type="RefSeq" id="WP_000658813.1">
    <property type="nucleotide sequence ID" value="NZ_CP138336.1"/>
</dbReference>
<dbReference type="SMR" id="Q81FP4"/>
<dbReference type="STRING" id="226900.BC_1532"/>
<dbReference type="KEGG" id="bce:BC1532"/>
<dbReference type="PATRIC" id="fig|226900.8.peg.1509"/>
<dbReference type="HOGENOM" id="CLU_047479_0_1_9"/>
<dbReference type="OrthoDB" id="9790352at2"/>
<dbReference type="UniPathway" id="UPA00034">
    <property type="reaction ID" value="UER00018"/>
</dbReference>
<dbReference type="Proteomes" id="UP000001417">
    <property type="component" value="Chromosome"/>
</dbReference>
<dbReference type="GO" id="GO:0005829">
    <property type="term" value="C:cytosol"/>
    <property type="evidence" value="ECO:0000318"/>
    <property type="project" value="GO_Central"/>
</dbReference>
<dbReference type="GO" id="GO:0008839">
    <property type="term" value="F:4-hydroxy-tetrahydrodipicolinate reductase"/>
    <property type="evidence" value="ECO:0000318"/>
    <property type="project" value="GO_Central"/>
</dbReference>
<dbReference type="GO" id="GO:0051287">
    <property type="term" value="F:NAD binding"/>
    <property type="evidence" value="ECO:0007669"/>
    <property type="project" value="UniProtKB-UniRule"/>
</dbReference>
<dbReference type="GO" id="GO:0050661">
    <property type="term" value="F:NADP binding"/>
    <property type="evidence" value="ECO:0007669"/>
    <property type="project" value="UniProtKB-UniRule"/>
</dbReference>
<dbReference type="GO" id="GO:0016726">
    <property type="term" value="F:oxidoreductase activity, acting on CH or CH2 groups, NAD or NADP as acceptor"/>
    <property type="evidence" value="ECO:0007669"/>
    <property type="project" value="UniProtKB-UniRule"/>
</dbReference>
<dbReference type="GO" id="GO:0019877">
    <property type="term" value="P:diaminopimelate biosynthetic process"/>
    <property type="evidence" value="ECO:0000318"/>
    <property type="project" value="GO_Central"/>
</dbReference>
<dbReference type="GO" id="GO:0009089">
    <property type="term" value="P:lysine biosynthetic process via diaminopimelate"/>
    <property type="evidence" value="ECO:0007669"/>
    <property type="project" value="UniProtKB-UniRule"/>
</dbReference>
<dbReference type="CDD" id="cd02274">
    <property type="entry name" value="DHDPR_N"/>
    <property type="match status" value="1"/>
</dbReference>
<dbReference type="FunFam" id="3.30.360.10:FF:000009">
    <property type="entry name" value="4-hydroxy-tetrahydrodipicolinate reductase"/>
    <property type="match status" value="1"/>
</dbReference>
<dbReference type="FunFam" id="3.40.50.720:FF:000180">
    <property type="entry name" value="4-hydroxy-tetrahydrodipicolinate reductase"/>
    <property type="match status" value="1"/>
</dbReference>
<dbReference type="Gene3D" id="3.30.360.10">
    <property type="entry name" value="Dihydrodipicolinate Reductase, domain 2"/>
    <property type="match status" value="1"/>
</dbReference>
<dbReference type="Gene3D" id="3.40.50.720">
    <property type="entry name" value="NAD(P)-binding Rossmann-like Domain"/>
    <property type="match status" value="1"/>
</dbReference>
<dbReference type="HAMAP" id="MF_00102">
    <property type="entry name" value="DapB"/>
    <property type="match status" value="1"/>
</dbReference>
<dbReference type="InterPro" id="IPR022663">
    <property type="entry name" value="DapB_C"/>
</dbReference>
<dbReference type="InterPro" id="IPR000846">
    <property type="entry name" value="DapB_N"/>
</dbReference>
<dbReference type="InterPro" id="IPR022664">
    <property type="entry name" value="DapB_N_CS"/>
</dbReference>
<dbReference type="InterPro" id="IPR023940">
    <property type="entry name" value="DHDPR_bac"/>
</dbReference>
<dbReference type="InterPro" id="IPR036291">
    <property type="entry name" value="NAD(P)-bd_dom_sf"/>
</dbReference>
<dbReference type="NCBIfam" id="TIGR00036">
    <property type="entry name" value="dapB"/>
    <property type="match status" value="1"/>
</dbReference>
<dbReference type="PANTHER" id="PTHR20836:SF0">
    <property type="entry name" value="4-HYDROXY-TETRAHYDRODIPICOLINATE REDUCTASE 1, CHLOROPLASTIC-RELATED"/>
    <property type="match status" value="1"/>
</dbReference>
<dbReference type="PANTHER" id="PTHR20836">
    <property type="entry name" value="DIHYDRODIPICOLINATE REDUCTASE"/>
    <property type="match status" value="1"/>
</dbReference>
<dbReference type="Pfam" id="PF05173">
    <property type="entry name" value="DapB_C"/>
    <property type="match status" value="1"/>
</dbReference>
<dbReference type="Pfam" id="PF01113">
    <property type="entry name" value="DapB_N"/>
    <property type="match status" value="1"/>
</dbReference>
<dbReference type="PIRSF" id="PIRSF000161">
    <property type="entry name" value="DHPR"/>
    <property type="match status" value="1"/>
</dbReference>
<dbReference type="SUPFAM" id="SSF55347">
    <property type="entry name" value="Glyceraldehyde-3-phosphate dehydrogenase-like, C-terminal domain"/>
    <property type="match status" value="1"/>
</dbReference>
<dbReference type="SUPFAM" id="SSF51735">
    <property type="entry name" value="NAD(P)-binding Rossmann-fold domains"/>
    <property type="match status" value="1"/>
</dbReference>
<dbReference type="PROSITE" id="PS01298">
    <property type="entry name" value="DAPB"/>
    <property type="match status" value="1"/>
</dbReference>
<gene>
    <name evidence="1" type="primary">dapB</name>
    <name type="ordered locus">BC_1532</name>
</gene>
<sequence>MKEIKVIIAGPRGRMGHEAVLLMERTEHFNLVAAVDYKHGGEKISDLPGMPALHAPIYADLHTCLDEVEADVLLDLTTPEVGKQHVTLAVERGLRSVIGTTGFTEEELTRLTENAKEKAVGTIIAPNFAIGAVLMMKFSQMAAKYFQDVEVIELHHDQKLDAPSGTAVKTVELIRQNRESKQQGHPNEVEQLAGARGANVDGIHIHSVRLPGLIAHQEVMFGGDGQMLTVRHDSFNRASFMSGVKLSIETVMNLDHLVYGLENIID</sequence>
<name>DAPB_BACCR</name>
<accession>Q81FP4</accession>
<reference key="1">
    <citation type="journal article" date="2003" name="Nature">
        <title>Genome sequence of Bacillus cereus and comparative analysis with Bacillus anthracis.</title>
        <authorList>
            <person name="Ivanova N."/>
            <person name="Sorokin A."/>
            <person name="Anderson I."/>
            <person name="Galleron N."/>
            <person name="Candelon B."/>
            <person name="Kapatral V."/>
            <person name="Bhattacharyya A."/>
            <person name="Reznik G."/>
            <person name="Mikhailova N."/>
            <person name="Lapidus A."/>
            <person name="Chu L."/>
            <person name="Mazur M."/>
            <person name="Goltsman E."/>
            <person name="Larsen N."/>
            <person name="D'Souza M."/>
            <person name="Walunas T."/>
            <person name="Grechkin Y."/>
            <person name="Pusch G."/>
            <person name="Haselkorn R."/>
            <person name="Fonstein M."/>
            <person name="Ehrlich S.D."/>
            <person name="Overbeek R."/>
            <person name="Kyrpides N.C."/>
        </authorList>
    </citation>
    <scope>NUCLEOTIDE SEQUENCE [LARGE SCALE GENOMIC DNA]</scope>
    <source>
        <strain>ATCC 14579 / DSM 31 / CCUG 7414 / JCM 2152 / NBRC 15305 / NCIMB 9373 / NCTC 2599 / NRRL B-3711</strain>
    </source>
</reference>
<keyword id="KW-0028">Amino-acid biosynthesis</keyword>
<keyword id="KW-0963">Cytoplasm</keyword>
<keyword id="KW-0220">Diaminopimelate biosynthesis</keyword>
<keyword id="KW-0457">Lysine biosynthesis</keyword>
<keyword id="KW-0520">NAD</keyword>
<keyword id="KW-0521">NADP</keyword>
<keyword id="KW-0560">Oxidoreductase</keyword>
<keyword id="KW-1185">Reference proteome</keyword>